<feature type="chain" id="PRO_0000333949" description="Cell division protein ZapB">
    <location>
        <begin position="1"/>
        <end position="79"/>
    </location>
</feature>
<feature type="coiled-coil region" evidence="1">
    <location>
        <begin position="6"/>
        <end position="78"/>
    </location>
</feature>
<accession>A4TS94</accession>
<keyword id="KW-0131">Cell cycle</keyword>
<keyword id="KW-0132">Cell division</keyword>
<keyword id="KW-0175">Coiled coil</keyword>
<keyword id="KW-0963">Cytoplasm</keyword>
<keyword id="KW-0717">Septation</keyword>
<comment type="function">
    <text evidence="1">Non-essential, abundant cell division factor that is required for proper Z-ring formation. It is recruited early to the divisome by direct interaction with FtsZ, stimulating Z-ring assembly and thereby promoting cell division earlier in the cell cycle. Its recruitment to the Z-ring requires functional FtsA or ZipA.</text>
</comment>
<comment type="subunit">
    <text evidence="1">Homodimer. The ends of the coiled-coil dimer bind to each other, forming polymers. Interacts with FtsZ.</text>
</comment>
<comment type="subcellular location">
    <subcellularLocation>
        <location>Cytoplasm</location>
    </subcellularLocation>
    <text evidence="1">Localizes to the septum at mid-cell, in a FtsZ-like pattern.</text>
</comment>
<comment type="similarity">
    <text evidence="1">Belongs to the ZapB family.</text>
</comment>
<name>ZAPB_YERPP</name>
<protein>
    <recommendedName>
        <fullName evidence="1">Cell division protein ZapB</fullName>
    </recommendedName>
</protein>
<gene>
    <name evidence="1" type="primary">zapB</name>
    <name type="ordered locus">YPDSF_3811</name>
</gene>
<dbReference type="EMBL" id="CP000668">
    <property type="protein sequence ID" value="ABP42156.1"/>
    <property type="molecule type" value="Genomic_DNA"/>
</dbReference>
<dbReference type="RefSeq" id="WP_002208953.1">
    <property type="nucleotide sequence ID" value="NZ_CP009715.1"/>
</dbReference>
<dbReference type="SMR" id="A4TS94"/>
<dbReference type="GeneID" id="96663567"/>
<dbReference type="KEGG" id="ypp:YPDSF_3811"/>
<dbReference type="PATRIC" id="fig|386656.14.peg.709"/>
<dbReference type="GO" id="GO:0005737">
    <property type="term" value="C:cytoplasm"/>
    <property type="evidence" value="ECO:0007669"/>
    <property type="project" value="UniProtKB-SubCell"/>
</dbReference>
<dbReference type="GO" id="GO:0000917">
    <property type="term" value="P:division septum assembly"/>
    <property type="evidence" value="ECO:0007669"/>
    <property type="project" value="UniProtKB-KW"/>
</dbReference>
<dbReference type="GO" id="GO:0043093">
    <property type="term" value="P:FtsZ-dependent cytokinesis"/>
    <property type="evidence" value="ECO:0007669"/>
    <property type="project" value="UniProtKB-UniRule"/>
</dbReference>
<dbReference type="Gene3D" id="1.20.5.340">
    <property type="match status" value="1"/>
</dbReference>
<dbReference type="HAMAP" id="MF_01196">
    <property type="entry name" value="ZapB"/>
    <property type="match status" value="1"/>
</dbReference>
<dbReference type="InterPro" id="IPR009252">
    <property type="entry name" value="Cell_div_ZapB"/>
</dbReference>
<dbReference type="NCBIfam" id="NF011951">
    <property type="entry name" value="PRK15422.1"/>
    <property type="match status" value="1"/>
</dbReference>
<dbReference type="Pfam" id="PF06005">
    <property type="entry name" value="ZapB"/>
    <property type="match status" value="1"/>
</dbReference>
<proteinExistence type="inferred from homology"/>
<evidence type="ECO:0000255" key="1">
    <source>
        <dbReference type="HAMAP-Rule" id="MF_01196"/>
    </source>
</evidence>
<sequence length="79" mass="9285">MSFEVFEKLEVKVQQAIDTITLLQMEIEELKEKNNTLTQEVQDAAGSREALVRENEQLKQEQHVWQDRLRALLGKMEEV</sequence>
<organism>
    <name type="scientific">Yersinia pestis (strain Pestoides F)</name>
    <dbReference type="NCBI Taxonomy" id="386656"/>
    <lineage>
        <taxon>Bacteria</taxon>
        <taxon>Pseudomonadati</taxon>
        <taxon>Pseudomonadota</taxon>
        <taxon>Gammaproteobacteria</taxon>
        <taxon>Enterobacterales</taxon>
        <taxon>Yersiniaceae</taxon>
        <taxon>Yersinia</taxon>
    </lineage>
</organism>
<reference key="1">
    <citation type="submission" date="2007-02" db="EMBL/GenBank/DDBJ databases">
        <title>Complete sequence of chromosome of Yersinia pestis Pestoides F.</title>
        <authorList>
            <consortium name="US DOE Joint Genome Institute"/>
            <person name="Copeland A."/>
            <person name="Lucas S."/>
            <person name="Lapidus A."/>
            <person name="Barry K."/>
            <person name="Detter J.C."/>
            <person name="Glavina del Rio T."/>
            <person name="Hammon N."/>
            <person name="Israni S."/>
            <person name="Dalin E."/>
            <person name="Tice H."/>
            <person name="Pitluck S."/>
            <person name="Di Bartolo G."/>
            <person name="Chain P."/>
            <person name="Malfatti S."/>
            <person name="Shin M."/>
            <person name="Vergez L."/>
            <person name="Schmutz J."/>
            <person name="Larimer F."/>
            <person name="Land M."/>
            <person name="Hauser L."/>
            <person name="Worsham P."/>
            <person name="Chu M."/>
            <person name="Bearden S."/>
            <person name="Garcia E."/>
            <person name="Richardson P."/>
        </authorList>
    </citation>
    <scope>NUCLEOTIDE SEQUENCE [LARGE SCALE GENOMIC DNA]</scope>
    <source>
        <strain>Pestoides F</strain>
    </source>
</reference>